<proteinExistence type="inferred from homology"/>
<feature type="initiator methionine" description="Removed" evidence="1">
    <location>
        <position position="1"/>
    </location>
</feature>
<feature type="chain" id="PRO_0000062004" description="Photosystem I iron-sulfur center">
    <location>
        <begin position="2"/>
        <end position="81"/>
    </location>
</feature>
<feature type="domain" description="4Fe-4S ferredoxin-type 1" evidence="2">
    <location>
        <begin position="2"/>
        <end position="31"/>
    </location>
</feature>
<feature type="domain" description="4Fe-4S ferredoxin-type 2" evidence="2">
    <location>
        <begin position="37"/>
        <end position="68"/>
    </location>
</feature>
<feature type="binding site" evidence="2">
    <location>
        <position position="11"/>
    </location>
    <ligand>
        <name>[4Fe-4S] cluster</name>
        <dbReference type="ChEBI" id="CHEBI:49883"/>
        <label>1</label>
    </ligand>
</feature>
<feature type="binding site" evidence="2">
    <location>
        <position position="14"/>
    </location>
    <ligand>
        <name>[4Fe-4S] cluster</name>
        <dbReference type="ChEBI" id="CHEBI:49883"/>
        <label>1</label>
    </ligand>
</feature>
<feature type="binding site" evidence="2">
    <location>
        <position position="17"/>
    </location>
    <ligand>
        <name>[4Fe-4S] cluster</name>
        <dbReference type="ChEBI" id="CHEBI:49883"/>
        <label>1</label>
    </ligand>
</feature>
<feature type="binding site" evidence="2">
    <location>
        <position position="21"/>
    </location>
    <ligand>
        <name>[4Fe-4S] cluster</name>
        <dbReference type="ChEBI" id="CHEBI:49883"/>
        <label>2</label>
    </ligand>
</feature>
<feature type="binding site" evidence="2">
    <location>
        <position position="48"/>
    </location>
    <ligand>
        <name>[4Fe-4S] cluster</name>
        <dbReference type="ChEBI" id="CHEBI:49883"/>
        <label>2</label>
    </ligand>
</feature>
<feature type="binding site" evidence="2">
    <location>
        <position position="51"/>
    </location>
    <ligand>
        <name>[4Fe-4S] cluster</name>
        <dbReference type="ChEBI" id="CHEBI:49883"/>
        <label>2</label>
    </ligand>
</feature>
<feature type="binding site" evidence="2">
    <location>
        <position position="54"/>
    </location>
    <ligand>
        <name>[4Fe-4S] cluster</name>
        <dbReference type="ChEBI" id="CHEBI:49883"/>
        <label>2</label>
    </ligand>
</feature>
<feature type="binding site" evidence="2">
    <location>
        <position position="58"/>
    </location>
    <ligand>
        <name>[4Fe-4S] cluster</name>
        <dbReference type="ChEBI" id="CHEBI:49883"/>
        <label>1</label>
    </ligand>
</feature>
<comment type="function">
    <text>Apoprotein for the two 4Fe-4S centers FA and FB of photosystem I (PSI); essential for photochemical activity. FB is the terminal electron acceptor of PSI, donating electrons to ferredoxin. The C-terminus interacts with PsaA/B/D and helps assemble the protein into the PSI complex. Required for binding of PsaD and PsaE to PSI. PSI is a plastocyanin/cytochrome c6-ferredoxin oxidoreductase, converting photonic excitation into a charge separation, which transfers an electron from the donor P700 chlorophyll pair to the spectroscopically characterized acceptors A0, A1, FX, FA and FB in turn.</text>
</comment>
<comment type="catalytic activity">
    <reaction evidence="2">
        <text>reduced [plastocyanin] + hnu + oxidized [2Fe-2S]-[ferredoxin] = oxidized [plastocyanin] + reduced [2Fe-2S]-[ferredoxin]</text>
        <dbReference type="Rhea" id="RHEA:30407"/>
        <dbReference type="Rhea" id="RHEA-COMP:10000"/>
        <dbReference type="Rhea" id="RHEA-COMP:10001"/>
        <dbReference type="Rhea" id="RHEA-COMP:10039"/>
        <dbReference type="Rhea" id="RHEA-COMP:10040"/>
        <dbReference type="ChEBI" id="CHEBI:29036"/>
        <dbReference type="ChEBI" id="CHEBI:30212"/>
        <dbReference type="ChEBI" id="CHEBI:33737"/>
        <dbReference type="ChEBI" id="CHEBI:33738"/>
        <dbReference type="ChEBI" id="CHEBI:49552"/>
        <dbReference type="EC" id="1.97.1.12"/>
    </reaction>
</comment>
<comment type="cofactor">
    <cofactor evidence="2">
        <name>[4Fe-4S] cluster</name>
        <dbReference type="ChEBI" id="CHEBI:49883"/>
    </cofactor>
    <text evidence="2">Binds 2 [4Fe-4S] clusters. Cluster 2 is most probably the spectroscopically characterized electron acceptor FA and cluster 1 is most probably FB.</text>
</comment>
<comment type="subunit">
    <text evidence="2">The eukaryotic PSI reaction center is composed of at least 11 subunits.</text>
</comment>
<comment type="subcellular location">
    <subcellularLocation>
        <location evidence="2">Plastid</location>
        <location evidence="2">Chloroplast thylakoid membrane</location>
        <topology evidence="2">Peripheral membrane protein</topology>
        <orientation evidence="2">Stromal side</orientation>
    </subcellularLocation>
</comment>
<name>PSAC_SKECO</name>
<gene>
    <name evidence="2" type="primary">psaC</name>
</gene>
<reference key="1">
    <citation type="journal article" date="1999" name="DNA Seq.">
        <title>Comparison of gene arrangements of chloroplasts between two centric diatoms, Skeletonema costatum and Odontella sinensis.</title>
        <authorList>
            <person name="Tada N."/>
            <person name="Shibata S."/>
            <person name="Otsuka S."/>
            <person name="Namba K."/>
            <person name="Oyaizu H."/>
        </authorList>
    </citation>
    <scope>NUCLEOTIDE SEQUENCE [GENOMIC DNA]</scope>
    <source>
        <strain>NIES-323 / Sk-85w</strain>
    </source>
</reference>
<geneLocation type="chloroplast"/>
<sequence length="81" mass="8798">MSHTVKIYDTCIGCTQCVRACPTDVLEMVPWDGCKSGQIASSPRVEDCVGCKRCETACPTDFLSVRVYLGAETTRSLGLAY</sequence>
<accession>O96804</accession>
<keyword id="KW-0004">4Fe-4S</keyword>
<keyword id="KW-0150">Chloroplast</keyword>
<keyword id="KW-0249">Electron transport</keyword>
<keyword id="KW-0408">Iron</keyword>
<keyword id="KW-0411">Iron-sulfur</keyword>
<keyword id="KW-0472">Membrane</keyword>
<keyword id="KW-0479">Metal-binding</keyword>
<keyword id="KW-0560">Oxidoreductase</keyword>
<keyword id="KW-0602">Photosynthesis</keyword>
<keyword id="KW-0603">Photosystem I</keyword>
<keyword id="KW-0934">Plastid</keyword>
<keyword id="KW-0677">Repeat</keyword>
<keyword id="KW-0793">Thylakoid</keyword>
<keyword id="KW-0813">Transport</keyword>
<dbReference type="EC" id="1.97.1.12" evidence="2"/>
<dbReference type="EMBL" id="AJ132264">
    <property type="protein sequence ID" value="CAA10625.1"/>
    <property type="molecule type" value="Genomic_DNA"/>
</dbReference>
<dbReference type="RefSeq" id="YP_010201120.1">
    <property type="nucleotide sequence ID" value="NC_058703.1"/>
</dbReference>
<dbReference type="RefSeq" id="YP_010201162.1">
    <property type="nucleotide sequence ID" value="NC_058703.1"/>
</dbReference>
<dbReference type="SMR" id="O96804"/>
<dbReference type="GeneID" id="68638316"/>
<dbReference type="GeneID" id="68638364"/>
<dbReference type="GO" id="GO:0009535">
    <property type="term" value="C:chloroplast thylakoid membrane"/>
    <property type="evidence" value="ECO:0007669"/>
    <property type="project" value="UniProtKB-SubCell"/>
</dbReference>
<dbReference type="GO" id="GO:0009522">
    <property type="term" value="C:photosystem I"/>
    <property type="evidence" value="ECO:0007669"/>
    <property type="project" value="UniProtKB-KW"/>
</dbReference>
<dbReference type="GO" id="GO:0051539">
    <property type="term" value="F:4 iron, 4 sulfur cluster binding"/>
    <property type="evidence" value="ECO:0007669"/>
    <property type="project" value="UniProtKB-KW"/>
</dbReference>
<dbReference type="GO" id="GO:0009055">
    <property type="term" value="F:electron transfer activity"/>
    <property type="evidence" value="ECO:0007669"/>
    <property type="project" value="UniProtKB-UniRule"/>
</dbReference>
<dbReference type="GO" id="GO:0046872">
    <property type="term" value="F:metal ion binding"/>
    <property type="evidence" value="ECO:0007669"/>
    <property type="project" value="UniProtKB-KW"/>
</dbReference>
<dbReference type="GO" id="GO:0016491">
    <property type="term" value="F:oxidoreductase activity"/>
    <property type="evidence" value="ECO:0007669"/>
    <property type="project" value="UniProtKB-KW"/>
</dbReference>
<dbReference type="GO" id="GO:0009773">
    <property type="term" value="P:photosynthetic electron transport in photosystem I"/>
    <property type="evidence" value="ECO:0007669"/>
    <property type="project" value="InterPro"/>
</dbReference>
<dbReference type="FunFam" id="3.30.70.20:FF:000001">
    <property type="entry name" value="Photosystem I iron-sulfur center"/>
    <property type="match status" value="1"/>
</dbReference>
<dbReference type="Gene3D" id="3.30.70.20">
    <property type="match status" value="1"/>
</dbReference>
<dbReference type="HAMAP" id="MF_01303">
    <property type="entry name" value="PSI_PsaC"/>
    <property type="match status" value="1"/>
</dbReference>
<dbReference type="InterPro" id="IPR017896">
    <property type="entry name" value="4Fe4S_Fe-S-bd"/>
</dbReference>
<dbReference type="InterPro" id="IPR017900">
    <property type="entry name" value="4Fe4S_Fe_S_CS"/>
</dbReference>
<dbReference type="InterPro" id="IPR050157">
    <property type="entry name" value="PSI_iron-sulfur_center"/>
</dbReference>
<dbReference type="InterPro" id="IPR017491">
    <property type="entry name" value="PSI_PsaC"/>
</dbReference>
<dbReference type="NCBIfam" id="TIGR03048">
    <property type="entry name" value="PS_I_psaC"/>
    <property type="match status" value="1"/>
</dbReference>
<dbReference type="PANTHER" id="PTHR24960:SF79">
    <property type="entry name" value="PHOTOSYSTEM I IRON-SULFUR CENTER"/>
    <property type="match status" value="1"/>
</dbReference>
<dbReference type="PANTHER" id="PTHR24960">
    <property type="entry name" value="PHOTOSYSTEM I IRON-SULFUR CENTER-RELATED"/>
    <property type="match status" value="1"/>
</dbReference>
<dbReference type="Pfam" id="PF12838">
    <property type="entry name" value="Fer4_7"/>
    <property type="match status" value="1"/>
</dbReference>
<dbReference type="SUPFAM" id="SSF54862">
    <property type="entry name" value="4Fe-4S ferredoxins"/>
    <property type="match status" value="1"/>
</dbReference>
<dbReference type="PROSITE" id="PS00198">
    <property type="entry name" value="4FE4S_FER_1"/>
    <property type="match status" value="2"/>
</dbReference>
<dbReference type="PROSITE" id="PS51379">
    <property type="entry name" value="4FE4S_FER_2"/>
    <property type="match status" value="2"/>
</dbReference>
<protein>
    <recommendedName>
        <fullName evidence="2">Photosystem I iron-sulfur center</fullName>
        <ecNumber evidence="2">1.97.1.12</ecNumber>
    </recommendedName>
    <alternativeName>
        <fullName evidence="2">9 kDa polypeptide</fullName>
    </alternativeName>
    <alternativeName>
        <fullName evidence="2">PSI-C</fullName>
    </alternativeName>
    <alternativeName>
        <fullName evidence="2">Photosystem I subunit VII</fullName>
    </alternativeName>
    <alternativeName>
        <fullName evidence="2">PsaC</fullName>
    </alternativeName>
</protein>
<evidence type="ECO:0000250" key="1"/>
<evidence type="ECO:0000255" key="2">
    <source>
        <dbReference type="HAMAP-Rule" id="MF_01303"/>
    </source>
</evidence>
<organism>
    <name type="scientific">Skeletonema costatum</name>
    <name type="common">Marine centric diatom</name>
    <name type="synonym">Melosira costata</name>
    <dbReference type="NCBI Taxonomy" id="2843"/>
    <lineage>
        <taxon>Eukaryota</taxon>
        <taxon>Sar</taxon>
        <taxon>Stramenopiles</taxon>
        <taxon>Ochrophyta</taxon>
        <taxon>Bacillariophyta</taxon>
        <taxon>Coscinodiscophyceae</taxon>
        <taxon>Thalassiosirophycidae</taxon>
        <taxon>Thalassiosirales</taxon>
        <taxon>Skeletonemataceae</taxon>
        <taxon>Skeletonema</taxon>
    </lineage>
</organism>